<name>B1KB_SICPE</name>
<accession>C0JB36</accession>
<reference key="1">
    <citation type="journal article" date="2009" name="Mol. Biol. Evol.">
        <title>Molecular evolution, functional variation, and proposed nomenclature of the gene family that includes sphingomyelinase D in sicariid spider venoms.</title>
        <authorList>
            <person name="Binford G.J."/>
            <person name="Bodner M.R."/>
            <person name="Cordes M.H."/>
            <person name="Baldwin K.L."/>
            <person name="Rynerson M.R."/>
            <person name="Burns S.N."/>
            <person name="Zobel-Thropp P.A."/>
        </authorList>
    </citation>
    <scope>NUCLEOTIDE SEQUENCE [MRNA]</scope>
    <scope>NOMENCLATURE</scope>
    <source>
        <tissue>Venom gland</tissue>
    </source>
</reference>
<evidence type="ECO:0000250" key="1">
    <source>
        <dbReference type="UniProtKB" id="A0A0D4WTV1"/>
    </source>
</evidence>
<evidence type="ECO:0000250" key="2">
    <source>
        <dbReference type="UniProtKB" id="A0A0D4WV12"/>
    </source>
</evidence>
<evidence type="ECO:0000250" key="3">
    <source>
        <dbReference type="UniProtKB" id="P0CE80"/>
    </source>
</evidence>
<evidence type="ECO:0000250" key="4">
    <source>
        <dbReference type="UniProtKB" id="Q4ZFU2"/>
    </source>
</evidence>
<evidence type="ECO:0000250" key="5">
    <source>
        <dbReference type="UniProtKB" id="Q8I914"/>
    </source>
</evidence>
<evidence type="ECO:0000303" key="6">
    <source>
    </source>
</evidence>
<evidence type="ECO:0000305" key="7"/>
<evidence type="ECO:0000305" key="8">
    <source>
    </source>
</evidence>
<proteinExistence type="evidence at transcript level"/>
<sequence length="272" mass="31004">WIMGHMVNDLSLVDEFLNDGANSLELDVEFSSSGTAQRTHHGFPCDCFRYCTNSEKFSTYLDYIRQLTTPGNSKFQSRLILLVMDLKLNPLSSSAAYNAGADVALNLLNHYWQRGESEARAYIVLSLSTIGGAEFISGFKSTMEKEGFADKYYDKIGWDFSGNEDLQQIRDVLENYGIREHIWQGDGITNCLPRGDSRLKEALNLRYSPSYIYADKVYTWSIDEENSIKHALWLGVDGVMTNHPERVIEVLGKSKYSDKLRLATYDDNPWEK</sequence>
<dbReference type="EC" id="4.6.1.-" evidence="4"/>
<dbReference type="EMBL" id="FJ171471">
    <property type="protein sequence ID" value="ACN48967.1"/>
    <property type="molecule type" value="mRNA"/>
</dbReference>
<dbReference type="SMR" id="C0JB36"/>
<dbReference type="GO" id="GO:0005576">
    <property type="term" value="C:extracellular region"/>
    <property type="evidence" value="ECO:0007669"/>
    <property type="project" value="UniProtKB-SubCell"/>
</dbReference>
<dbReference type="GO" id="GO:0016829">
    <property type="term" value="F:lyase activity"/>
    <property type="evidence" value="ECO:0007669"/>
    <property type="project" value="UniProtKB-KW"/>
</dbReference>
<dbReference type="GO" id="GO:0046872">
    <property type="term" value="F:metal ion binding"/>
    <property type="evidence" value="ECO:0007669"/>
    <property type="project" value="UniProtKB-KW"/>
</dbReference>
<dbReference type="GO" id="GO:0008081">
    <property type="term" value="F:phosphoric diester hydrolase activity"/>
    <property type="evidence" value="ECO:0007669"/>
    <property type="project" value="InterPro"/>
</dbReference>
<dbReference type="GO" id="GO:0090729">
    <property type="term" value="F:toxin activity"/>
    <property type="evidence" value="ECO:0007669"/>
    <property type="project" value="UniProtKB-KW"/>
</dbReference>
<dbReference type="GO" id="GO:0031640">
    <property type="term" value="P:killing of cells of another organism"/>
    <property type="evidence" value="ECO:0007669"/>
    <property type="project" value="UniProtKB-KW"/>
</dbReference>
<dbReference type="GO" id="GO:0016042">
    <property type="term" value="P:lipid catabolic process"/>
    <property type="evidence" value="ECO:0007669"/>
    <property type="project" value="UniProtKB-KW"/>
</dbReference>
<dbReference type="CDD" id="cd08576">
    <property type="entry name" value="GDPD_like_SMaseD_PLD"/>
    <property type="match status" value="1"/>
</dbReference>
<dbReference type="Gene3D" id="3.20.20.190">
    <property type="entry name" value="Phosphatidylinositol (PI) phosphodiesterase"/>
    <property type="match status" value="1"/>
</dbReference>
<dbReference type="InterPro" id="IPR017946">
    <property type="entry name" value="PLC-like_Pdiesterase_TIM-brl"/>
</dbReference>
<dbReference type="Pfam" id="PF13653">
    <property type="entry name" value="GDPD_2"/>
    <property type="match status" value="1"/>
</dbReference>
<dbReference type="SUPFAM" id="SSF51695">
    <property type="entry name" value="PLC-like phosphodiesterases"/>
    <property type="match status" value="1"/>
</dbReference>
<organism>
    <name type="scientific">Sicarius peruensis</name>
    <name type="common">Six-eyed sand spider</name>
    <dbReference type="NCBI Taxonomy" id="571541"/>
    <lineage>
        <taxon>Eukaryota</taxon>
        <taxon>Metazoa</taxon>
        <taxon>Ecdysozoa</taxon>
        <taxon>Arthropoda</taxon>
        <taxon>Chelicerata</taxon>
        <taxon>Arachnida</taxon>
        <taxon>Araneae</taxon>
        <taxon>Araneomorphae</taxon>
        <taxon>Haplogynae</taxon>
        <taxon>Scytodoidea</taxon>
        <taxon>Sicariidae</taxon>
        <taxon>Sicarius</taxon>
    </lineage>
</organism>
<comment type="function">
    <text evidence="1 3">Dermonecrotic toxins cleave the phosphodiester linkage between the phosphate and headgroup of certain phospholipids (sphingolipid and lysolipid substrates), forming an alcohol (often choline) and a cyclic phosphate (By similarity). This toxin acts on sphingomyelin (SM) (By similarity). It may also act on ceramide phosphoethanolamine (CPE), lysophosphatidylcholine (LPC) and lysophosphatidylethanolamine (LPE), but not on lysophosphatidylserine (LPS), and lysophosphatidylglycerol (LPG) (By similarity). It acts by transphosphatidylation, releasing exclusively cyclic phosphate products as second products (By similarity). Induces dermonecrosis, hemolysis, increased vascular permeability, edema, inflammatory response, and platelet aggregation (By similarity).</text>
</comment>
<comment type="catalytic activity">
    <reaction evidence="1">
        <text>an N-(acyl)-sphingosylphosphocholine = an N-(acyl)-sphingosyl-1,3-cyclic phosphate + choline</text>
        <dbReference type="Rhea" id="RHEA:60652"/>
        <dbReference type="ChEBI" id="CHEBI:15354"/>
        <dbReference type="ChEBI" id="CHEBI:64583"/>
        <dbReference type="ChEBI" id="CHEBI:143892"/>
    </reaction>
</comment>
<comment type="catalytic activity">
    <reaction evidence="1">
        <text>an N-(acyl)-sphingosylphosphoethanolamine = an N-(acyl)-sphingosyl-1,3-cyclic phosphate + ethanolamine</text>
        <dbReference type="Rhea" id="RHEA:60648"/>
        <dbReference type="ChEBI" id="CHEBI:57603"/>
        <dbReference type="ChEBI" id="CHEBI:143891"/>
        <dbReference type="ChEBI" id="CHEBI:143892"/>
    </reaction>
</comment>
<comment type="catalytic activity">
    <reaction evidence="1">
        <text>a 1-acyl-sn-glycero-3-phosphocholine = a 1-acyl-sn-glycero-2,3-cyclic phosphate + choline</text>
        <dbReference type="Rhea" id="RHEA:60700"/>
        <dbReference type="ChEBI" id="CHEBI:15354"/>
        <dbReference type="ChEBI" id="CHEBI:58168"/>
        <dbReference type="ChEBI" id="CHEBI:143947"/>
    </reaction>
</comment>
<comment type="catalytic activity">
    <reaction evidence="1">
        <text>a 1-acyl-sn-glycero-3-phosphoethanolamine = a 1-acyl-sn-glycero-2,3-cyclic phosphate + ethanolamine</text>
        <dbReference type="Rhea" id="RHEA:60704"/>
        <dbReference type="ChEBI" id="CHEBI:57603"/>
        <dbReference type="ChEBI" id="CHEBI:64381"/>
        <dbReference type="ChEBI" id="CHEBI:143947"/>
    </reaction>
</comment>
<comment type="cofactor">
    <cofactor evidence="5">
        <name>Mg(2+)</name>
        <dbReference type="ChEBI" id="CHEBI:18420"/>
    </cofactor>
    <text evidence="5">Binds 1 Mg(2+) ion per subunit.</text>
</comment>
<comment type="subcellular location">
    <subcellularLocation>
        <location evidence="8">Secreted</location>
    </subcellularLocation>
</comment>
<comment type="tissue specificity">
    <text evidence="8">Expressed by the venom gland.</text>
</comment>
<comment type="similarity">
    <text evidence="7">Belongs to the arthropod phospholipase D family. Class II subfamily.</text>
</comment>
<comment type="caution">
    <text evidence="1 2 4">The most common activity assay for dermonecrotic toxins detects enzymatic activity by monitoring choline release from substrate. Liberation of choline from sphingomyelin (SM) or lysophosphatidylcholine (LPC) is commonly assumed to result from substrate hydrolysis, giving either ceramide-1-phosphate (C1P) or lysophosphatidic acid (LPA), respectively, as a second product. However, two studies from Lajoie and colleagues (2013 and 2015) report the observation of exclusive formation of cyclic phosphate products as second products, resulting from intramolecular transphosphatidylation. Cyclic phosphates have vastly different biological properties from their monoester counterparts, and they may be relevant to the pathology of brown spider envenomation.</text>
</comment>
<protein>
    <recommendedName>
        <fullName evidence="6">Dermonecrotic toxin SpeSicTox-betaIB1b</fullName>
        <ecNumber evidence="4">4.6.1.-</ecNumber>
    </recommendedName>
    <alternativeName>
        <fullName>Phospholipase D</fullName>
        <shortName>PLD</shortName>
    </alternativeName>
    <alternativeName>
        <fullName>Sphingomyelin phosphodiesterase D</fullName>
        <shortName>SMD</shortName>
        <shortName>SMase D</shortName>
        <shortName>Sphingomyelinase D</shortName>
    </alternativeName>
</protein>
<keyword id="KW-0204">Cytolysis</keyword>
<keyword id="KW-1061">Dermonecrotic toxin</keyword>
<keyword id="KW-1015">Disulfide bond</keyword>
<keyword id="KW-0354">Hemolysis</keyword>
<keyword id="KW-0442">Lipid degradation</keyword>
<keyword id="KW-0443">Lipid metabolism</keyword>
<keyword id="KW-0456">Lyase</keyword>
<keyword id="KW-0460">Magnesium</keyword>
<keyword id="KW-0479">Metal-binding</keyword>
<keyword id="KW-0964">Secreted</keyword>
<keyword id="KW-0800">Toxin</keyword>
<feature type="chain" id="PRO_0000392849" description="Dermonecrotic toxin SpeSicTox-betaIB1b">
    <location>
        <begin position="1" status="less than"/>
        <end position="272"/>
    </location>
</feature>
<feature type="active site" evidence="5">
    <location>
        <position position="5"/>
    </location>
</feature>
<feature type="active site" description="Nucleophile" evidence="5">
    <location>
        <position position="41"/>
    </location>
</feature>
<feature type="binding site" evidence="5">
    <location>
        <position position="25"/>
    </location>
    <ligand>
        <name>Mg(2+)</name>
        <dbReference type="ChEBI" id="CHEBI:18420"/>
    </ligand>
</feature>
<feature type="binding site" evidence="5">
    <location>
        <position position="27"/>
    </location>
    <ligand>
        <name>Mg(2+)</name>
        <dbReference type="ChEBI" id="CHEBI:18420"/>
    </ligand>
</feature>
<feature type="binding site" evidence="5">
    <location>
        <position position="85"/>
    </location>
    <ligand>
        <name>Mg(2+)</name>
        <dbReference type="ChEBI" id="CHEBI:18420"/>
    </ligand>
</feature>
<feature type="disulfide bond" evidence="3">
    <location>
        <begin position="45"/>
        <end position="51"/>
    </location>
</feature>
<feature type="disulfide bond" evidence="3">
    <location>
        <begin position="47"/>
        <end position="191"/>
    </location>
</feature>
<feature type="non-terminal residue">
    <location>
        <position position="1"/>
    </location>
</feature>